<reference key="1">
    <citation type="submission" date="2009-01" db="EMBL/GenBank/DDBJ databases">
        <title>Complete sequence of Anaeromyxobacter dehalogenans 2CP-1.</title>
        <authorList>
            <person name="Lucas S."/>
            <person name="Copeland A."/>
            <person name="Lapidus A."/>
            <person name="Glavina del Rio T."/>
            <person name="Dalin E."/>
            <person name="Tice H."/>
            <person name="Bruce D."/>
            <person name="Goodwin L."/>
            <person name="Pitluck S."/>
            <person name="Saunders E."/>
            <person name="Brettin T."/>
            <person name="Detter J.C."/>
            <person name="Han C."/>
            <person name="Larimer F."/>
            <person name="Land M."/>
            <person name="Hauser L."/>
            <person name="Kyrpides N."/>
            <person name="Ovchinnikova G."/>
            <person name="Beliaev A.S."/>
            <person name="Richardson P."/>
        </authorList>
    </citation>
    <scope>NUCLEOTIDE SEQUENCE [LARGE SCALE GENOMIC DNA]</scope>
    <source>
        <strain>2CP-1 / ATCC BAA-258</strain>
    </source>
</reference>
<comment type="function">
    <text evidence="1">Catalyzes the dephosphorylation of undecaprenyl diphosphate (UPP). Confers resistance to bacitracin.</text>
</comment>
<comment type="catalytic activity">
    <reaction evidence="1">
        <text>di-trans,octa-cis-undecaprenyl diphosphate + H2O = di-trans,octa-cis-undecaprenyl phosphate + phosphate + H(+)</text>
        <dbReference type="Rhea" id="RHEA:28094"/>
        <dbReference type="ChEBI" id="CHEBI:15377"/>
        <dbReference type="ChEBI" id="CHEBI:15378"/>
        <dbReference type="ChEBI" id="CHEBI:43474"/>
        <dbReference type="ChEBI" id="CHEBI:58405"/>
        <dbReference type="ChEBI" id="CHEBI:60392"/>
        <dbReference type="EC" id="3.6.1.27"/>
    </reaction>
</comment>
<comment type="subcellular location">
    <subcellularLocation>
        <location evidence="1">Cell inner membrane</location>
        <topology evidence="1">Multi-pass membrane protein</topology>
    </subcellularLocation>
</comment>
<comment type="miscellaneous">
    <text>Bacitracin is thought to be involved in the inhibition of peptidoglycan synthesis by sequestering undecaprenyl diphosphate, thereby reducing the pool of lipid carrier available.</text>
</comment>
<comment type="similarity">
    <text evidence="1">Belongs to the UppP family.</text>
</comment>
<feature type="chain" id="PRO_1000148798" description="Undecaprenyl-diphosphatase">
    <location>
        <begin position="1"/>
        <end position="292"/>
    </location>
</feature>
<feature type="transmembrane region" description="Helical" evidence="1">
    <location>
        <begin position="1"/>
        <end position="21"/>
    </location>
</feature>
<feature type="transmembrane region" description="Helical" evidence="1">
    <location>
        <begin position="46"/>
        <end position="66"/>
    </location>
</feature>
<feature type="transmembrane region" description="Helical" evidence="1">
    <location>
        <begin position="90"/>
        <end position="110"/>
    </location>
</feature>
<feature type="transmembrane region" description="Helical" evidence="1">
    <location>
        <begin position="114"/>
        <end position="134"/>
    </location>
</feature>
<feature type="transmembrane region" description="Helical" evidence="1">
    <location>
        <begin position="192"/>
        <end position="212"/>
    </location>
</feature>
<feature type="transmembrane region" description="Helical" evidence="1">
    <location>
        <begin position="225"/>
        <end position="245"/>
    </location>
</feature>
<feature type="transmembrane region" description="Helical" evidence="1">
    <location>
        <begin position="253"/>
        <end position="273"/>
    </location>
</feature>
<accession>B8J8T6</accession>
<gene>
    <name evidence="1" type="primary">uppP</name>
    <name type="ordered locus">A2cp1_0175</name>
</gene>
<evidence type="ECO:0000255" key="1">
    <source>
        <dbReference type="HAMAP-Rule" id="MF_01006"/>
    </source>
</evidence>
<sequence length="292" mass="30436">MSLVSAALFGLLQALTEFLPVSSTAHLLVFGELLGHSLDDRRFRAFVTIIQAGTTLAVLVYFRADIARLVAAAARGLARGRPFGTPEARLGWYIVLGTVPAALAGKLLEHRIEALGNWVIAGSLVALGLVLLAAERLASHRRRVEDVGAGDALLIGVAQALALVPGSSRSGTTITGGMLLGFTREAAARFSFLLSVPITLAAGAYKLWSTVPDLRGEAAWTVATVVGTVVSAVAGYLVIDWLLAWLRTRTTYVFVVWRLAAGAAIAALILSGVLPAGAEAPPPPPPALHAAP</sequence>
<name>UPPP_ANAD2</name>
<proteinExistence type="inferred from homology"/>
<dbReference type="EC" id="3.6.1.27" evidence="1"/>
<dbReference type="EMBL" id="CP001359">
    <property type="protein sequence ID" value="ACL63534.1"/>
    <property type="molecule type" value="Genomic_DNA"/>
</dbReference>
<dbReference type="RefSeq" id="WP_012631605.1">
    <property type="nucleotide sequence ID" value="NC_011891.1"/>
</dbReference>
<dbReference type="SMR" id="B8J8T6"/>
<dbReference type="KEGG" id="acp:A2cp1_0175"/>
<dbReference type="HOGENOM" id="CLU_060296_1_0_7"/>
<dbReference type="Proteomes" id="UP000007089">
    <property type="component" value="Chromosome"/>
</dbReference>
<dbReference type="GO" id="GO:0005886">
    <property type="term" value="C:plasma membrane"/>
    <property type="evidence" value="ECO:0007669"/>
    <property type="project" value="UniProtKB-SubCell"/>
</dbReference>
<dbReference type="GO" id="GO:0050380">
    <property type="term" value="F:undecaprenyl-diphosphatase activity"/>
    <property type="evidence" value="ECO:0007669"/>
    <property type="project" value="UniProtKB-UniRule"/>
</dbReference>
<dbReference type="GO" id="GO:0071555">
    <property type="term" value="P:cell wall organization"/>
    <property type="evidence" value="ECO:0007669"/>
    <property type="project" value="UniProtKB-KW"/>
</dbReference>
<dbReference type="GO" id="GO:0009252">
    <property type="term" value="P:peptidoglycan biosynthetic process"/>
    <property type="evidence" value="ECO:0007669"/>
    <property type="project" value="UniProtKB-KW"/>
</dbReference>
<dbReference type="GO" id="GO:0008360">
    <property type="term" value="P:regulation of cell shape"/>
    <property type="evidence" value="ECO:0007669"/>
    <property type="project" value="UniProtKB-KW"/>
</dbReference>
<dbReference type="GO" id="GO:0046677">
    <property type="term" value="P:response to antibiotic"/>
    <property type="evidence" value="ECO:0007669"/>
    <property type="project" value="UniProtKB-UniRule"/>
</dbReference>
<dbReference type="HAMAP" id="MF_01006">
    <property type="entry name" value="Undec_diphosphatase"/>
    <property type="match status" value="1"/>
</dbReference>
<dbReference type="InterPro" id="IPR003824">
    <property type="entry name" value="UppP"/>
</dbReference>
<dbReference type="PANTHER" id="PTHR30622">
    <property type="entry name" value="UNDECAPRENYL-DIPHOSPHATASE"/>
    <property type="match status" value="1"/>
</dbReference>
<dbReference type="PANTHER" id="PTHR30622:SF4">
    <property type="entry name" value="UNDECAPRENYL-DIPHOSPHATASE"/>
    <property type="match status" value="1"/>
</dbReference>
<dbReference type="Pfam" id="PF02673">
    <property type="entry name" value="BacA"/>
    <property type="match status" value="1"/>
</dbReference>
<protein>
    <recommendedName>
        <fullName evidence="1">Undecaprenyl-diphosphatase</fullName>
        <ecNumber evidence="1">3.6.1.27</ecNumber>
    </recommendedName>
    <alternativeName>
        <fullName evidence="1">Bacitracin resistance protein</fullName>
    </alternativeName>
    <alternativeName>
        <fullName evidence="1">Undecaprenyl pyrophosphate phosphatase</fullName>
    </alternativeName>
</protein>
<keyword id="KW-0046">Antibiotic resistance</keyword>
<keyword id="KW-0997">Cell inner membrane</keyword>
<keyword id="KW-1003">Cell membrane</keyword>
<keyword id="KW-0133">Cell shape</keyword>
<keyword id="KW-0961">Cell wall biogenesis/degradation</keyword>
<keyword id="KW-0378">Hydrolase</keyword>
<keyword id="KW-0472">Membrane</keyword>
<keyword id="KW-0573">Peptidoglycan synthesis</keyword>
<keyword id="KW-0812">Transmembrane</keyword>
<keyword id="KW-1133">Transmembrane helix</keyword>
<organism>
    <name type="scientific">Anaeromyxobacter dehalogenans (strain 2CP-1 / ATCC BAA-258)</name>
    <dbReference type="NCBI Taxonomy" id="455488"/>
    <lineage>
        <taxon>Bacteria</taxon>
        <taxon>Pseudomonadati</taxon>
        <taxon>Myxococcota</taxon>
        <taxon>Myxococcia</taxon>
        <taxon>Myxococcales</taxon>
        <taxon>Cystobacterineae</taxon>
        <taxon>Anaeromyxobacteraceae</taxon>
        <taxon>Anaeromyxobacter</taxon>
    </lineage>
</organism>